<organism>
    <name type="scientific">Klebsiella pneumoniae (strain 342)</name>
    <dbReference type="NCBI Taxonomy" id="507522"/>
    <lineage>
        <taxon>Bacteria</taxon>
        <taxon>Pseudomonadati</taxon>
        <taxon>Pseudomonadota</taxon>
        <taxon>Gammaproteobacteria</taxon>
        <taxon>Enterobacterales</taxon>
        <taxon>Enterobacteriaceae</taxon>
        <taxon>Klebsiella/Raoultella group</taxon>
        <taxon>Klebsiella</taxon>
        <taxon>Klebsiella pneumoniae complex</taxon>
    </lineage>
</organism>
<evidence type="ECO:0000255" key="1">
    <source>
        <dbReference type="HAMAP-Rule" id="MF_00417"/>
    </source>
</evidence>
<dbReference type="EC" id="3.4.19.3" evidence="1"/>
<dbReference type="EMBL" id="CP000964">
    <property type="protein sequence ID" value="ACI08892.1"/>
    <property type="molecule type" value="Genomic_DNA"/>
</dbReference>
<dbReference type="SMR" id="B5XZE0"/>
<dbReference type="MEROPS" id="C15.001"/>
<dbReference type="KEGG" id="kpe:KPK_3845"/>
<dbReference type="HOGENOM" id="CLU_043960_4_0_6"/>
<dbReference type="Proteomes" id="UP000001734">
    <property type="component" value="Chromosome"/>
</dbReference>
<dbReference type="GO" id="GO:0005829">
    <property type="term" value="C:cytosol"/>
    <property type="evidence" value="ECO:0007669"/>
    <property type="project" value="InterPro"/>
</dbReference>
<dbReference type="GO" id="GO:0016920">
    <property type="term" value="F:pyroglutamyl-peptidase activity"/>
    <property type="evidence" value="ECO:0007669"/>
    <property type="project" value="UniProtKB-UniRule"/>
</dbReference>
<dbReference type="GO" id="GO:0006508">
    <property type="term" value="P:proteolysis"/>
    <property type="evidence" value="ECO:0007669"/>
    <property type="project" value="UniProtKB-KW"/>
</dbReference>
<dbReference type="CDD" id="cd00501">
    <property type="entry name" value="Peptidase_C15"/>
    <property type="match status" value="1"/>
</dbReference>
<dbReference type="FunFam" id="3.40.630.20:FF:000001">
    <property type="entry name" value="Pyrrolidone-carboxylate peptidase"/>
    <property type="match status" value="1"/>
</dbReference>
<dbReference type="Gene3D" id="3.40.630.20">
    <property type="entry name" value="Peptidase C15, pyroglutamyl peptidase I-like"/>
    <property type="match status" value="1"/>
</dbReference>
<dbReference type="HAMAP" id="MF_00417">
    <property type="entry name" value="Pyrrolid_peptidase"/>
    <property type="match status" value="1"/>
</dbReference>
<dbReference type="InterPro" id="IPR000816">
    <property type="entry name" value="Peptidase_C15"/>
</dbReference>
<dbReference type="InterPro" id="IPR016125">
    <property type="entry name" value="Peptidase_C15-like"/>
</dbReference>
<dbReference type="InterPro" id="IPR036440">
    <property type="entry name" value="Peptidase_C15-like_sf"/>
</dbReference>
<dbReference type="InterPro" id="IPR029762">
    <property type="entry name" value="PGP-I_bact-type"/>
</dbReference>
<dbReference type="InterPro" id="IPR033694">
    <property type="entry name" value="PGPEP1_Cys_AS"/>
</dbReference>
<dbReference type="InterPro" id="IPR033693">
    <property type="entry name" value="PGPEP1_Glu_AS"/>
</dbReference>
<dbReference type="NCBIfam" id="NF009676">
    <property type="entry name" value="PRK13197.1"/>
    <property type="match status" value="1"/>
</dbReference>
<dbReference type="NCBIfam" id="TIGR00504">
    <property type="entry name" value="pyro_pdase"/>
    <property type="match status" value="1"/>
</dbReference>
<dbReference type="PANTHER" id="PTHR23402">
    <property type="entry name" value="PROTEASE FAMILY C15 PYROGLUTAMYL-PEPTIDASE I-RELATED"/>
    <property type="match status" value="1"/>
</dbReference>
<dbReference type="PANTHER" id="PTHR23402:SF1">
    <property type="entry name" value="PYROGLUTAMYL-PEPTIDASE I"/>
    <property type="match status" value="1"/>
</dbReference>
<dbReference type="Pfam" id="PF01470">
    <property type="entry name" value="Peptidase_C15"/>
    <property type="match status" value="1"/>
</dbReference>
<dbReference type="PIRSF" id="PIRSF015592">
    <property type="entry name" value="Prld-crbxl_pptds"/>
    <property type="match status" value="1"/>
</dbReference>
<dbReference type="PRINTS" id="PR00706">
    <property type="entry name" value="PYROGLUPTASE"/>
</dbReference>
<dbReference type="SUPFAM" id="SSF53182">
    <property type="entry name" value="Pyrrolidone carboxyl peptidase (pyroglutamate aminopeptidase)"/>
    <property type="match status" value="1"/>
</dbReference>
<dbReference type="PROSITE" id="PS01334">
    <property type="entry name" value="PYRASE_CYS"/>
    <property type="match status" value="1"/>
</dbReference>
<dbReference type="PROSITE" id="PS01333">
    <property type="entry name" value="PYRASE_GLU"/>
    <property type="match status" value="1"/>
</dbReference>
<proteinExistence type="inferred from homology"/>
<name>PCP_KLEP3</name>
<sequence length="214" mass="22430">MAGVLLTGFEPFDGETVNPSWEVVKQLDGTMIAGQPVIARQLPCVFGEALSVLYAAIEDLQPRLVIAVGQAGGRVDISVERVAINVDDARIPDNKGQQPVDTPIVDGGPAAWFSTLPIKAIVSALRDRGIPASVSQTAGTFVCNHVMYGLLHKLQEQAGVRGGFIHIPWLPAQAAAHPGEPSMATATVREALETAIAVALRQSVDSKLGGGATH</sequence>
<accession>B5XZE0</accession>
<comment type="function">
    <text evidence="1">Removes 5-oxoproline from various penultimate amino acid residues except L-proline.</text>
</comment>
<comment type="catalytic activity">
    <reaction evidence="1">
        <text>Release of an N-terminal pyroglutamyl group from a polypeptide, the second amino acid generally not being Pro.</text>
        <dbReference type="EC" id="3.4.19.3"/>
    </reaction>
</comment>
<comment type="subunit">
    <text evidence="1">Homotetramer.</text>
</comment>
<comment type="subcellular location">
    <subcellularLocation>
        <location evidence="1">Cytoplasm</location>
    </subcellularLocation>
</comment>
<comment type="similarity">
    <text evidence="1">Belongs to the peptidase C15 family.</text>
</comment>
<gene>
    <name evidence="1" type="primary">pcp</name>
    <name type="ordered locus">KPK_3845</name>
</gene>
<keyword id="KW-0963">Cytoplasm</keyword>
<keyword id="KW-0378">Hydrolase</keyword>
<keyword id="KW-0645">Protease</keyword>
<keyword id="KW-0788">Thiol protease</keyword>
<feature type="chain" id="PRO_1000123998" description="Pyrrolidone-carboxylate peptidase">
    <location>
        <begin position="1"/>
        <end position="214"/>
    </location>
</feature>
<feature type="active site" evidence="1">
    <location>
        <position position="80"/>
    </location>
</feature>
<feature type="active site" evidence="1">
    <location>
        <position position="143"/>
    </location>
</feature>
<feature type="active site" evidence="1">
    <location>
        <position position="166"/>
    </location>
</feature>
<reference key="1">
    <citation type="journal article" date="2008" name="PLoS Genet.">
        <title>Complete genome sequence of the N2-fixing broad host range endophyte Klebsiella pneumoniae 342 and virulence predictions verified in mice.</title>
        <authorList>
            <person name="Fouts D.E."/>
            <person name="Tyler H.L."/>
            <person name="DeBoy R.T."/>
            <person name="Daugherty S."/>
            <person name="Ren Q."/>
            <person name="Badger J.H."/>
            <person name="Durkin A.S."/>
            <person name="Huot H."/>
            <person name="Shrivastava S."/>
            <person name="Kothari S."/>
            <person name="Dodson R.J."/>
            <person name="Mohamoud Y."/>
            <person name="Khouri H."/>
            <person name="Roesch L.F.W."/>
            <person name="Krogfelt K.A."/>
            <person name="Struve C."/>
            <person name="Triplett E.W."/>
            <person name="Methe B.A."/>
        </authorList>
    </citation>
    <scope>NUCLEOTIDE SEQUENCE [LARGE SCALE GENOMIC DNA]</scope>
    <source>
        <strain>342</strain>
    </source>
</reference>
<protein>
    <recommendedName>
        <fullName evidence="1">Pyrrolidone-carboxylate peptidase</fullName>
        <ecNumber evidence="1">3.4.19.3</ecNumber>
    </recommendedName>
    <alternativeName>
        <fullName evidence="1">5-oxoprolyl-peptidase</fullName>
    </alternativeName>
    <alternativeName>
        <fullName evidence="1">Pyroglutamyl-peptidase I</fullName>
        <shortName evidence="1">PGP-I</shortName>
        <shortName evidence="1">Pyrase</shortName>
    </alternativeName>
</protein>